<evidence type="ECO:0000255" key="1">
    <source>
        <dbReference type="HAMAP-Rule" id="MF_01626"/>
    </source>
</evidence>
<keyword id="KW-0143">Chaperone</keyword>
<keyword id="KW-0963">Cytoplasm</keyword>
<gene>
    <name evidence="1" type="primary">viaA</name>
    <name type="ordered locus">EcHS_A3961</name>
</gene>
<feature type="chain" id="PRO_1000069606" description="Regulatory protein ViaA">
    <location>
        <begin position="1"/>
        <end position="483"/>
    </location>
</feature>
<comment type="function">
    <text evidence="1">Component of the RavA-ViaA chaperone complex, which may act on the membrane to optimize the function of some of the respiratory chains. ViaA stimulates the ATPase activity of RavA.</text>
</comment>
<comment type="subunit">
    <text evidence="1">Homodimer. Interacts with RavA.</text>
</comment>
<comment type="subcellular location">
    <subcellularLocation>
        <location evidence="1">Cytoplasm</location>
    </subcellularLocation>
</comment>
<comment type="similarity">
    <text evidence="1">Belongs to the ViaA family.</text>
</comment>
<organism>
    <name type="scientific">Escherichia coli O9:H4 (strain HS)</name>
    <dbReference type="NCBI Taxonomy" id="331112"/>
    <lineage>
        <taxon>Bacteria</taxon>
        <taxon>Pseudomonadati</taxon>
        <taxon>Pseudomonadota</taxon>
        <taxon>Gammaproteobacteria</taxon>
        <taxon>Enterobacterales</taxon>
        <taxon>Enterobacteriaceae</taxon>
        <taxon>Escherichia</taxon>
    </lineage>
</organism>
<proteinExistence type="inferred from homology"/>
<sequence length="483" mass="55877">MLTLDTLNVMLAVSEEGLIEEMIIALLASPQLAVFFEKFPRLKAAITDDVPRWREALRSRLKDARVPPELTEEVMCYQQSQLLSTPQFIVQLPQILDLLHRLNSPWAEQARQLVDANSAITSALHTLFLQRWRLSLIVQATTLNQQLLEEEREQLLSEVQERMTLSGQLEPILADNNTAAGRLWDMSAGQLKRGDYQLIVKYGEFLNEQPELKRLAEQLGRSREAKSIPRNDAQMETFRTMVREPATVPEQVDGLQQSDDILRLLPPELATLGITELEYEFYRRLVEKQLLTYRLHGESWREKVIERPVVHKDYDEQPRGPFIVCVDTSGSMGGFNEQCAKAFCLALMRIALAENRRCYIMLFSTEIVRYELSGPQGIEQAIRFLSQQFRGGTDLASCFRAIMERLQSREWFDADAVVISDFIAQRLPDDVTSKVKELQRVHQHRFHAVAMSAHGKPGIMRIFDHIWRFDTGMRSRLLRRWRR</sequence>
<accession>A8A6K8</accession>
<protein>
    <recommendedName>
        <fullName evidence="1">Regulatory protein ViaA</fullName>
    </recommendedName>
    <alternativeName>
        <fullName evidence="1">VWA interacting with AAA+ ATPase</fullName>
    </alternativeName>
</protein>
<name>VIAA_ECOHS</name>
<dbReference type="EMBL" id="CP000802">
    <property type="protein sequence ID" value="ABV08162.1"/>
    <property type="molecule type" value="Genomic_DNA"/>
</dbReference>
<dbReference type="RefSeq" id="WP_000956615.1">
    <property type="nucleotide sequence ID" value="NC_009800.1"/>
</dbReference>
<dbReference type="SMR" id="A8A6K8"/>
<dbReference type="KEGG" id="ecx:EcHS_A3961"/>
<dbReference type="HOGENOM" id="CLU_022130_0_0_6"/>
<dbReference type="GO" id="GO:0005829">
    <property type="term" value="C:cytosol"/>
    <property type="evidence" value="ECO:0007669"/>
    <property type="project" value="TreeGrafter"/>
</dbReference>
<dbReference type="CDD" id="cd01462">
    <property type="entry name" value="VWA_YIEM_type"/>
    <property type="match status" value="1"/>
</dbReference>
<dbReference type="Gene3D" id="3.40.50.410">
    <property type="entry name" value="von Willebrand factor, type A domain"/>
    <property type="match status" value="1"/>
</dbReference>
<dbReference type="HAMAP" id="MF_01626">
    <property type="entry name" value="ViaA"/>
    <property type="match status" value="1"/>
</dbReference>
<dbReference type="InterPro" id="IPR008912">
    <property type="entry name" value="Uncharacterised_CoxE"/>
</dbReference>
<dbReference type="InterPro" id="IPR023481">
    <property type="entry name" value="Uncharacterised_ViaA"/>
</dbReference>
<dbReference type="InterPro" id="IPR002035">
    <property type="entry name" value="VWF_A"/>
</dbReference>
<dbReference type="InterPro" id="IPR036465">
    <property type="entry name" value="vWFA_dom_sf"/>
</dbReference>
<dbReference type="NCBIfam" id="NF008230">
    <property type="entry name" value="PRK10997.1"/>
    <property type="match status" value="1"/>
</dbReference>
<dbReference type="PANTHER" id="PTHR36846">
    <property type="entry name" value="PROTEIN VIAA"/>
    <property type="match status" value="1"/>
</dbReference>
<dbReference type="PANTHER" id="PTHR36846:SF1">
    <property type="entry name" value="PROTEIN VIAA"/>
    <property type="match status" value="1"/>
</dbReference>
<dbReference type="Pfam" id="PF05762">
    <property type="entry name" value="VWA_CoxE"/>
    <property type="match status" value="1"/>
</dbReference>
<dbReference type="SMART" id="SM00327">
    <property type="entry name" value="VWA"/>
    <property type="match status" value="1"/>
</dbReference>
<dbReference type="SUPFAM" id="SSF53300">
    <property type="entry name" value="vWA-like"/>
    <property type="match status" value="1"/>
</dbReference>
<reference key="1">
    <citation type="journal article" date="2008" name="J. Bacteriol.">
        <title>The pangenome structure of Escherichia coli: comparative genomic analysis of E. coli commensal and pathogenic isolates.</title>
        <authorList>
            <person name="Rasko D.A."/>
            <person name="Rosovitz M.J."/>
            <person name="Myers G.S.A."/>
            <person name="Mongodin E.F."/>
            <person name="Fricke W.F."/>
            <person name="Gajer P."/>
            <person name="Crabtree J."/>
            <person name="Sebaihia M."/>
            <person name="Thomson N.R."/>
            <person name="Chaudhuri R."/>
            <person name="Henderson I.R."/>
            <person name="Sperandio V."/>
            <person name="Ravel J."/>
        </authorList>
    </citation>
    <scope>NUCLEOTIDE SEQUENCE [LARGE SCALE GENOMIC DNA]</scope>
    <source>
        <strain>HS</strain>
    </source>
</reference>